<keyword id="KW-0002">3D-structure</keyword>
<keyword id="KW-0143">Chaperone</keyword>
<keyword id="KW-0903">Direct protein sequencing</keyword>
<keyword id="KW-1015">Disulfide bond</keyword>
<keyword id="KW-0574">Periplasm</keyword>
<keyword id="KW-1185">Reference proteome</keyword>
<keyword id="KW-0732">Signal</keyword>
<feature type="signal peptide" evidence="1 8 9 11 12">
    <location>
        <begin position="1"/>
        <end position="21"/>
    </location>
</feature>
<feature type="chain" id="PRO_0000021404" description="Acid stress chaperone HdeA">
    <location>
        <begin position="22"/>
        <end position="110"/>
    </location>
</feature>
<feature type="disulfide bond" evidence="2 10">
    <location>
        <begin position="39"/>
        <end position="87"/>
    </location>
</feature>
<feature type="strand" evidence="15">
    <location>
        <begin position="24"/>
        <end position="27"/>
    </location>
</feature>
<feature type="helix" evidence="14">
    <location>
        <begin position="34"/>
        <end position="36"/>
    </location>
</feature>
<feature type="helix" evidence="14">
    <location>
        <begin position="39"/>
        <end position="43"/>
    </location>
</feature>
<feature type="helix" evidence="14">
    <location>
        <begin position="47"/>
        <end position="49"/>
    </location>
</feature>
<feature type="helix" evidence="14">
    <location>
        <begin position="50"/>
        <end position="62"/>
    </location>
</feature>
<feature type="helix" evidence="14">
    <location>
        <begin position="66"/>
        <end position="68"/>
    </location>
</feature>
<feature type="helix" evidence="14">
    <location>
        <begin position="73"/>
        <end position="88"/>
    </location>
</feature>
<feature type="turn" evidence="14">
    <location>
        <begin position="89"/>
        <end position="92"/>
    </location>
</feature>
<feature type="helix" evidence="14">
    <location>
        <begin position="95"/>
        <end position="103"/>
    </location>
</feature>
<feature type="turn" evidence="15">
    <location>
        <begin position="107"/>
        <end position="109"/>
    </location>
</feature>
<proteinExistence type="evidence at protein level"/>
<protein>
    <recommendedName>
        <fullName evidence="1">Acid stress chaperone HdeA</fullName>
    </recommendedName>
    <alternativeName>
        <fullName>10K-S protein</fullName>
    </alternativeName>
</protein>
<organism>
    <name type="scientific">Escherichia coli (strain K12)</name>
    <dbReference type="NCBI Taxonomy" id="83333"/>
    <lineage>
        <taxon>Bacteria</taxon>
        <taxon>Pseudomonadati</taxon>
        <taxon>Pseudomonadota</taxon>
        <taxon>Gammaproteobacteria</taxon>
        <taxon>Enterobacterales</taxon>
        <taxon>Enterobacteriaceae</taxon>
        <taxon>Escherichia</taxon>
    </lineage>
</organism>
<dbReference type="EMBL" id="D11109">
    <property type="protein sequence ID" value="BAA01883.1"/>
    <property type="molecule type" value="Genomic_DNA"/>
</dbReference>
<dbReference type="EMBL" id="U00039">
    <property type="protein sequence ID" value="AAB18486.1"/>
    <property type="molecule type" value="Genomic_DNA"/>
</dbReference>
<dbReference type="EMBL" id="U00096">
    <property type="protein sequence ID" value="AAC76535.1"/>
    <property type="molecule type" value="Genomic_DNA"/>
</dbReference>
<dbReference type="EMBL" id="AP009048">
    <property type="protein sequence ID" value="BAE77784.1"/>
    <property type="molecule type" value="Genomic_DNA"/>
</dbReference>
<dbReference type="PIR" id="S30268">
    <property type="entry name" value="S30268"/>
</dbReference>
<dbReference type="RefSeq" id="NP_417967.1">
    <property type="nucleotide sequence ID" value="NC_000913.3"/>
</dbReference>
<dbReference type="RefSeq" id="WP_000756550.1">
    <property type="nucleotide sequence ID" value="NZ_SSZK01000042.1"/>
</dbReference>
<dbReference type="PDB" id="1BG8">
    <property type="method" value="X-ray"/>
    <property type="resolution" value="2.20 A"/>
    <property type="chains" value="A/B/C=22-110"/>
</dbReference>
<dbReference type="PDB" id="1DJ8">
    <property type="method" value="X-ray"/>
    <property type="resolution" value="2.00 A"/>
    <property type="chains" value="A/B/C/D/E/F=22-110"/>
</dbReference>
<dbReference type="PDB" id="5WYO">
    <property type="method" value="NMR"/>
    <property type="chains" value="A/B=22-110"/>
</dbReference>
<dbReference type="PDBsum" id="1BG8"/>
<dbReference type="PDBsum" id="1DJ8"/>
<dbReference type="PDBsum" id="5WYO"/>
<dbReference type="BMRB" id="P0AES9"/>
<dbReference type="SMR" id="P0AES9"/>
<dbReference type="BioGRID" id="4262518">
    <property type="interactions" value="8"/>
</dbReference>
<dbReference type="DIP" id="DIP-47945N"/>
<dbReference type="FunCoup" id="P0AES9">
    <property type="interactions" value="46"/>
</dbReference>
<dbReference type="STRING" id="511145.b3510"/>
<dbReference type="jPOST" id="P0AES9"/>
<dbReference type="PaxDb" id="511145-b3510"/>
<dbReference type="EnsemblBacteria" id="AAC76535">
    <property type="protein sequence ID" value="AAC76535"/>
    <property type="gene ID" value="b3510"/>
</dbReference>
<dbReference type="GeneID" id="93778475"/>
<dbReference type="GeneID" id="948025"/>
<dbReference type="KEGG" id="ecj:JW3478"/>
<dbReference type="KEGG" id="eco:b3510"/>
<dbReference type="KEGG" id="ecoc:C3026_19015"/>
<dbReference type="PATRIC" id="fig|511145.12.peg.3617"/>
<dbReference type="EchoBASE" id="EB1370"/>
<dbReference type="eggNOG" id="ENOG5032Y4G">
    <property type="taxonomic scope" value="Bacteria"/>
</dbReference>
<dbReference type="HOGENOM" id="CLU_170142_1_0_6"/>
<dbReference type="InParanoid" id="P0AES9"/>
<dbReference type="OMA" id="ACTENKK"/>
<dbReference type="OrthoDB" id="7581659at2"/>
<dbReference type="BioCyc" id="EcoCyc:EG11398-MONOMER"/>
<dbReference type="EvolutionaryTrace" id="P0AES9"/>
<dbReference type="PRO" id="PR:P0AES9"/>
<dbReference type="Proteomes" id="UP000000625">
    <property type="component" value="Chromosome"/>
</dbReference>
<dbReference type="GO" id="GO:0030288">
    <property type="term" value="C:outer membrane-bounded periplasmic space"/>
    <property type="evidence" value="ECO:0000314"/>
    <property type="project" value="EcoCyc"/>
</dbReference>
<dbReference type="GO" id="GO:0042802">
    <property type="term" value="F:identical protein binding"/>
    <property type="evidence" value="ECO:0000353"/>
    <property type="project" value="IntAct"/>
</dbReference>
<dbReference type="GO" id="GO:0044183">
    <property type="term" value="F:protein folding chaperone"/>
    <property type="evidence" value="ECO:0000314"/>
    <property type="project" value="DisProt"/>
</dbReference>
<dbReference type="GO" id="GO:0042803">
    <property type="term" value="F:protein homodimerization activity"/>
    <property type="evidence" value="ECO:0000314"/>
    <property type="project" value="EcoCyc"/>
</dbReference>
<dbReference type="GO" id="GO:0051082">
    <property type="term" value="F:unfolded protein binding"/>
    <property type="evidence" value="ECO:0000314"/>
    <property type="project" value="EcoCyc"/>
</dbReference>
<dbReference type="GO" id="GO:1990451">
    <property type="term" value="P:cellular stress response to acidic pH"/>
    <property type="evidence" value="ECO:0000315"/>
    <property type="project" value="EcoCyc"/>
</dbReference>
<dbReference type="GO" id="GO:0061077">
    <property type="term" value="P:chaperone-mediated protein folding"/>
    <property type="evidence" value="ECO:0000314"/>
    <property type="project" value="EcoCyc"/>
</dbReference>
<dbReference type="DisProt" id="DP02548"/>
<dbReference type="FunFam" id="1.10.890.10:FF:000001">
    <property type="entry name" value="Acid stress chaperone HdeA"/>
    <property type="match status" value="1"/>
</dbReference>
<dbReference type="Gene3D" id="1.10.890.10">
    <property type="entry name" value="HNS-dependent expression A"/>
    <property type="match status" value="1"/>
</dbReference>
<dbReference type="HAMAP" id="MF_00946">
    <property type="entry name" value="HdeA"/>
    <property type="match status" value="1"/>
</dbReference>
<dbReference type="InterPro" id="IPR024972">
    <property type="entry name" value="HdeA"/>
</dbReference>
<dbReference type="InterPro" id="IPR038303">
    <property type="entry name" value="HdeA/HdeB_sf"/>
</dbReference>
<dbReference type="InterPro" id="IPR036831">
    <property type="entry name" value="HdeA_sf"/>
</dbReference>
<dbReference type="InterPro" id="IPR010486">
    <property type="entry name" value="HNS-dep_expression_A/B"/>
</dbReference>
<dbReference type="NCBIfam" id="NF007576">
    <property type="entry name" value="PRK10208.1"/>
    <property type="match status" value="1"/>
</dbReference>
<dbReference type="Pfam" id="PF06411">
    <property type="entry name" value="HdeA"/>
    <property type="match status" value="1"/>
</dbReference>
<dbReference type="PIRSF" id="PIRSF009564">
    <property type="entry name" value="HNS-dep_expression_A"/>
    <property type="match status" value="1"/>
</dbReference>
<dbReference type="SUPFAM" id="SSF47752">
    <property type="entry name" value="Protein HNS-dependent expression A, HdeA"/>
    <property type="match status" value="1"/>
</dbReference>
<accession>P0AES9</accession>
<accession>P26604</accession>
<accession>Q2M7H2</accession>
<comment type="function">
    <text evidence="4 5 6 7">Required for optimal acid stress protection. Exhibits a chaperone-like activity only at pH below 3 by suppressing non-specifically the aggregation of denaturated periplasmic proteins. Important for survival of enteric bacteria in the acidic environment of the host stomach. Also promotes the solubilization at neutral pH of proteins that had aggregated in their presence at acidic pHs. May cooperate with other periplasmic chaperones such as DegP and SurA.</text>
</comment>
<comment type="subunit">
    <text evidence="2">Homodimer at neutral pH. Dissociates into monomer at pH 4. Changes from a highly ordered form at pH above 3.1 to a highly disordered form at pH below 2.5 that is essential for its chaperone activity.</text>
</comment>
<comment type="interaction">
    <interactant intactId="EBI-15826386">
        <id>P0AES9</id>
    </interactant>
    <interactant intactId="EBI-15826386">
        <id>P0AES9</id>
        <label>hdeA</label>
    </interactant>
    <organismsDiffer>false</organismsDiffer>
    <experiments>2</experiments>
</comment>
<comment type="subcellular location">
    <subcellularLocation>
        <location evidence="1 5">Periplasm</location>
    </subcellularLocation>
</comment>
<comment type="induction">
    <text>Activated by a low pH-induced dimer-to-monomer transition.</text>
</comment>
<comment type="mass spectrometry"/>
<comment type="miscellaneous">
    <text evidence="13">In vitro, HdeA is more efficient than HdeB at pH 2 and HdeB is more efficient than HdeA at pH 3. In vivo, both are required for optimal protection against acid stress at either pH 3 or pH 2 (PubMed:17085547).</text>
</comment>
<comment type="similarity">
    <text evidence="1">Belongs to the HdeA family.</text>
</comment>
<sequence>MKKVLGVILGGLLLLPVVSNAADAQKAADNKKPVNSWTCEDFLAVDESFQPTAVGFAEALNNKDKPEDAVLDVQGIATVTPAIVQACTQDKQANFKDKVKGEWDKIKKDM</sequence>
<reference key="1">
    <citation type="journal article" date="1993" name="Mol. Gen. Genet.">
        <title>Function of the Escherichia coli nucleoid protein, H-NS: molecular analysis of a subset of proteins whose expression is enhanced in a hns deletion mutant.</title>
        <authorList>
            <person name="Yoshida T."/>
            <person name="Ueguchi C."/>
            <person name="Yamada H."/>
            <person name="Mizuno T."/>
        </authorList>
    </citation>
    <scope>NUCLEOTIDE SEQUENCE [GENOMIC DNA]</scope>
    <scope>PROTEIN SEQUENCE OF 22-40</scope>
    <source>
        <strain>K12</strain>
    </source>
</reference>
<reference key="2">
    <citation type="journal article" date="1994" name="Nucleic Acids Res.">
        <title>Analysis of the Escherichia coli genome. V. DNA sequence of the region from 76.0 to 81.5 minutes.</title>
        <authorList>
            <person name="Sofia H.J."/>
            <person name="Burland V."/>
            <person name="Daniels D.L."/>
            <person name="Plunkett G. III"/>
            <person name="Blattner F.R."/>
        </authorList>
    </citation>
    <scope>NUCLEOTIDE SEQUENCE [LARGE SCALE GENOMIC DNA]</scope>
    <source>
        <strain>K12 / MG1655 / ATCC 47076</strain>
    </source>
</reference>
<reference key="3">
    <citation type="journal article" date="1997" name="Science">
        <title>The complete genome sequence of Escherichia coli K-12.</title>
        <authorList>
            <person name="Blattner F.R."/>
            <person name="Plunkett G. III"/>
            <person name="Bloch C.A."/>
            <person name="Perna N.T."/>
            <person name="Burland V."/>
            <person name="Riley M."/>
            <person name="Collado-Vides J."/>
            <person name="Glasner J.D."/>
            <person name="Rode C.K."/>
            <person name="Mayhew G.F."/>
            <person name="Gregor J."/>
            <person name="Davis N.W."/>
            <person name="Kirkpatrick H.A."/>
            <person name="Goeden M.A."/>
            <person name="Rose D.J."/>
            <person name="Mau B."/>
            <person name="Shao Y."/>
        </authorList>
    </citation>
    <scope>NUCLEOTIDE SEQUENCE [LARGE SCALE GENOMIC DNA]</scope>
    <source>
        <strain>K12 / MG1655 / ATCC 47076</strain>
    </source>
</reference>
<reference key="4">
    <citation type="journal article" date="2006" name="Mol. Syst. Biol.">
        <title>Highly accurate genome sequences of Escherichia coli K-12 strains MG1655 and W3110.</title>
        <authorList>
            <person name="Hayashi K."/>
            <person name="Morooka N."/>
            <person name="Yamamoto Y."/>
            <person name="Fujita K."/>
            <person name="Isono K."/>
            <person name="Choi S."/>
            <person name="Ohtsubo E."/>
            <person name="Baba T."/>
            <person name="Wanner B.L."/>
            <person name="Mori H."/>
            <person name="Horiuchi T."/>
        </authorList>
    </citation>
    <scope>NUCLEOTIDE SEQUENCE [LARGE SCALE GENOMIC DNA]</scope>
    <source>
        <strain>K12 / W3110 / ATCC 27325 / DSM 5911</strain>
    </source>
</reference>
<reference key="5">
    <citation type="journal article" date="1993" name="J. Bacteriol.">
        <title>Physical map location of a set of Escherichia coli genes (hde) whose expression is affected by the nucleoid protein H-NS.</title>
        <authorList>
            <person name="Yoshida T."/>
            <person name="Ueguchi C."/>
            <person name="Mizuno T."/>
        </authorList>
    </citation>
    <scope>GENE NAME</scope>
</reference>
<reference key="6">
    <citation type="submission" date="1994-09" db="UniProtKB">
        <authorList>
            <person name="Pasquali C."/>
            <person name="Sanchez J.-C."/>
            <person name="Ravier F."/>
            <person name="Golaz O."/>
            <person name="Hughes G.J."/>
            <person name="Frutiger S."/>
            <person name="Paquet N."/>
            <person name="Wilkins M."/>
            <person name="Appel R.D."/>
            <person name="Bairoch A."/>
            <person name="Hochstrasser D.F."/>
        </authorList>
    </citation>
    <scope>PROTEIN SEQUENCE OF 22-41</scope>
    <source>
        <strain>K12 / W3110 / ATCC 27325 / DSM 5911</strain>
    </source>
</reference>
<reference key="7">
    <citation type="journal article" date="1997" name="Electrophoresis">
        <title>Comparing the predicted and observed properties of proteins encoded in the genome of Escherichia coli K-12.</title>
        <authorList>
            <person name="Link A.J."/>
            <person name="Robison K."/>
            <person name="Church G.M."/>
        </authorList>
    </citation>
    <scope>PROTEIN SEQUENCE OF 22-33</scope>
    <source>
        <strain>K12 / EMG2</strain>
    </source>
</reference>
<reference key="8">
    <citation type="journal article" date="1998" name="FEMS Microbiol. Lett.">
        <title>Small genes/gene-products in Escherichia coli K-12.</title>
        <authorList>
            <person name="Wasinger V.C."/>
            <person name="Humphery-Smith I."/>
        </authorList>
    </citation>
    <scope>PROTEIN SEQUENCE OF 22-31</scope>
    <source>
        <strain>K12</strain>
    </source>
</reference>
<reference key="9">
    <citation type="journal article" date="2002" name="J. Am. Chem. Soc.">
        <title>Gas-phase concentration, purification, and identification of whole proteins from complex mixtures.</title>
        <authorList>
            <person name="Reid G.E."/>
            <person name="Shang H."/>
            <person name="Hogan J.M."/>
            <person name="Lee G.U."/>
            <person name="McLuckey S.A."/>
        </authorList>
    </citation>
    <scope>MASS SPECTROMETRY</scope>
    <source>
        <strain>ATCC 15597</strain>
    </source>
</reference>
<reference key="10">
    <citation type="journal article" date="2005" name="J. Biol. Chem.">
        <title>Periplasmic protein HdeA exhibits chaperone-like activity exclusively within stomach pH range by transforming into disordered conformation.</title>
        <authorList>
            <person name="Hong W."/>
            <person name="Jiao W."/>
            <person name="Hu J."/>
            <person name="Zhang J."/>
            <person name="Liu C."/>
            <person name="Fu X."/>
            <person name="Shen D."/>
            <person name="Xia B."/>
            <person name="Chang Z."/>
        </authorList>
    </citation>
    <scope>FUNCTION AS A CHAPERONE-LIKE PROTEIN</scope>
</reference>
<reference key="11">
    <citation type="journal article" date="2007" name="J. Bacteriol.">
        <title>Escherichia coli HdeB is an acid stress chaperone.</title>
        <authorList>
            <person name="Kern R."/>
            <person name="Malki A."/>
            <person name="Abdallah J."/>
            <person name="Tagourti J."/>
            <person name="Richarme G."/>
        </authorList>
    </citation>
    <scope>FUNCTION</scope>
    <scope>SUBCELLULAR LOCATION</scope>
    <source>
        <strain>K12 / MG1655 / ATCC 47076</strain>
    </source>
</reference>
<reference key="12">
    <citation type="journal article" date="2008" name="J. Biol. Chem.">
        <title>Solubilization of protein aggregates by the acid stress chaperones HdeA and HdeB.</title>
        <authorList>
            <person name="Malki A."/>
            <person name="Le H.-T."/>
            <person name="Milles S."/>
            <person name="Kern R."/>
            <person name="Caldas T."/>
            <person name="Abdallah J."/>
            <person name="Richarme G."/>
        </authorList>
    </citation>
    <scope>FUNCTION IN PROTEIN SOLUBILIZATION AT NEUTRAL PH</scope>
</reference>
<reference key="13">
    <citation type="journal article" date="2011" name="Nat. Chem. Biol.">
        <title>A genetically incorporated crosslinker reveals chaperone cooperation in acid resistance.</title>
        <authorList>
            <person name="Zhang M."/>
            <person name="Lin S."/>
            <person name="Song X."/>
            <person name="Liu J."/>
            <person name="Fu Y."/>
            <person name="Ge X."/>
            <person name="Fu X."/>
            <person name="Chang Z."/>
            <person name="Chen P.R."/>
        </authorList>
    </citation>
    <scope>FUNCTION</scope>
</reference>
<reference key="14">
    <citation type="journal article" date="1998" name="Nat. Struct. Biol.">
        <title>Crystal structure of Escherichia coli HdeA.</title>
        <authorList>
            <person name="Yang F."/>
            <person name="Gustafson K.R."/>
            <person name="Boyd M.R."/>
            <person name="Wlodawer A."/>
        </authorList>
    </citation>
    <scope>X-RAY CRYSTALLOGRAPHY (2.2 ANGSTROMS)</scope>
    <scope>DISULFIDE BOND</scope>
</reference>
<reference key="15">
    <citation type="journal article" date="2000" name="J. Mol. Biol.">
        <title>HDEA, a periplasmic protein that supports acid resistance in pathogenic enteric bacteria.</title>
        <authorList>
            <person name="Gajiwala K.S."/>
            <person name="Burley S.K."/>
        </authorList>
    </citation>
    <scope>X-RAY CRYSTALLOGRAPHY (2.0 ANGSTROMS)</scope>
    <scope>DISULFIDE BOND</scope>
    <scope>SUBUNIT</scope>
</reference>
<gene>
    <name evidence="1" type="primary">hdeA</name>
    <name type="synonym">yhhC</name>
    <name type="synonym">yhiB</name>
    <name type="ordered locus">b3510</name>
    <name type="ordered locus">JW3478</name>
</gene>
<evidence type="ECO:0000255" key="1">
    <source>
        <dbReference type="HAMAP-Rule" id="MF_00946"/>
    </source>
</evidence>
<evidence type="ECO:0000269" key="2">
    <source>
    </source>
</evidence>
<evidence type="ECO:0000269" key="3">
    <source>
    </source>
</evidence>
<evidence type="ECO:0000269" key="4">
    <source>
    </source>
</evidence>
<evidence type="ECO:0000269" key="5">
    <source>
    </source>
</evidence>
<evidence type="ECO:0000269" key="6">
    <source>
    </source>
</evidence>
<evidence type="ECO:0000269" key="7">
    <source>
    </source>
</evidence>
<evidence type="ECO:0000269" key="8">
    <source>
    </source>
</evidence>
<evidence type="ECO:0000269" key="9">
    <source>
    </source>
</evidence>
<evidence type="ECO:0000269" key="10">
    <source>
    </source>
</evidence>
<evidence type="ECO:0000269" key="11">
    <source>
    </source>
</evidence>
<evidence type="ECO:0000269" key="12">
    <source ref="6"/>
</evidence>
<evidence type="ECO:0000305" key="13">
    <source>
    </source>
</evidence>
<evidence type="ECO:0007829" key="14">
    <source>
        <dbReference type="PDB" id="1DJ8"/>
    </source>
</evidence>
<evidence type="ECO:0007829" key="15">
    <source>
        <dbReference type="PDB" id="5WYO"/>
    </source>
</evidence>
<name>HDEA_ECOLI</name>